<reference key="1">
    <citation type="journal article" date="2005" name="Genome Res.">
        <title>Comparative and functional genomic analyses of the pathogenicity of phytopathogen Xanthomonas campestris pv. campestris.</title>
        <authorList>
            <person name="Qian W."/>
            <person name="Jia Y."/>
            <person name="Ren S.-X."/>
            <person name="He Y.-Q."/>
            <person name="Feng J.-X."/>
            <person name="Lu L.-F."/>
            <person name="Sun Q."/>
            <person name="Ying G."/>
            <person name="Tang D.-J."/>
            <person name="Tang H."/>
            <person name="Wu W."/>
            <person name="Hao P."/>
            <person name="Wang L."/>
            <person name="Jiang B.-L."/>
            <person name="Zeng S."/>
            <person name="Gu W.-Y."/>
            <person name="Lu G."/>
            <person name="Rong L."/>
            <person name="Tian Y."/>
            <person name="Yao Z."/>
            <person name="Fu G."/>
            <person name="Chen B."/>
            <person name="Fang R."/>
            <person name="Qiang B."/>
            <person name="Chen Z."/>
            <person name="Zhao G.-P."/>
            <person name="Tang J.-L."/>
            <person name="He C."/>
        </authorList>
    </citation>
    <scope>NUCLEOTIDE SEQUENCE [LARGE SCALE GENOMIC DNA]</scope>
    <source>
        <strain>8004</strain>
    </source>
</reference>
<evidence type="ECO:0000255" key="1">
    <source>
        <dbReference type="HAMAP-Rule" id="MF_00059"/>
    </source>
</evidence>
<organism>
    <name type="scientific">Xanthomonas campestris pv. campestris (strain 8004)</name>
    <dbReference type="NCBI Taxonomy" id="314565"/>
    <lineage>
        <taxon>Bacteria</taxon>
        <taxon>Pseudomonadati</taxon>
        <taxon>Pseudomonadota</taxon>
        <taxon>Gammaproteobacteria</taxon>
        <taxon>Lysobacterales</taxon>
        <taxon>Lysobacteraceae</taxon>
        <taxon>Xanthomonas</taxon>
    </lineage>
</organism>
<dbReference type="EC" id="2.7.7.6" evidence="1"/>
<dbReference type="EMBL" id="CP000050">
    <property type="protein sequence ID" value="AAY50360.1"/>
    <property type="molecule type" value="Genomic_DNA"/>
</dbReference>
<dbReference type="RefSeq" id="WP_002811635.1">
    <property type="nucleotide sequence ID" value="NZ_CP155948.1"/>
</dbReference>
<dbReference type="SMR" id="Q4URG3"/>
<dbReference type="KEGG" id="xcb:XC_3316"/>
<dbReference type="HOGENOM" id="CLU_053084_0_1_6"/>
<dbReference type="Proteomes" id="UP000000420">
    <property type="component" value="Chromosome"/>
</dbReference>
<dbReference type="GO" id="GO:0005737">
    <property type="term" value="C:cytoplasm"/>
    <property type="evidence" value="ECO:0007669"/>
    <property type="project" value="UniProtKB-ARBA"/>
</dbReference>
<dbReference type="GO" id="GO:0000428">
    <property type="term" value="C:DNA-directed RNA polymerase complex"/>
    <property type="evidence" value="ECO:0007669"/>
    <property type="project" value="UniProtKB-KW"/>
</dbReference>
<dbReference type="GO" id="GO:0003677">
    <property type="term" value="F:DNA binding"/>
    <property type="evidence" value="ECO:0007669"/>
    <property type="project" value="UniProtKB-UniRule"/>
</dbReference>
<dbReference type="GO" id="GO:0003899">
    <property type="term" value="F:DNA-directed RNA polymerase activity"/>
    <property type="evidence" value="ECO:0007669"/>
    <property type="project" value="UniProtKB-UniRule"/>
</dbReference>
<dbReference type="GO" id="GO:0046983">
    <property type="term" value="F:protein dimerization activity"/>
    <property type="evidence" value="ECO:0007669"/>
    <property type="project" value="InterPro"/>
</dbReference>
<dbReference type="GO" id="GO:0006351">
    <property type="term" value="P:DNA-templated transcription"/>
    <property type="evidence" value="ECO:0007669"/>
    <property type="project" value="UniProtKB-UniRule"/>
</dbReference>
<dbReference type="CDD" id="cd06928">
    <property type="entry name" value="RNAP_alpha_NTD"/>
    <property type="match status" value="1"/>
</dbReference>
<dbReference type="FunFam" id="1.10.150.20:FF:000001">
    <property type="entry name" value="DNA-directed RNA polymerase subunit alpha"/>
    <property type="match status" value="1"/>
</dbReference>
<dbReference type="FunFam" id="2.170.120.12:FF:000001">
    <property type="entry name" value="DNA-directed RNA polymerase subunit alpha"/>
    <property type="match status" value="1"/>
</dbReference>
<dbReference type="Gene3D" id="1.10.150.20">
    <property type="entry name" value="5' to 3' exonuclease, C-terminal subdomain"/>
    <property type="match status" value="1"/>
</dbReference>
<dbReference type="Gene3D" id="2.170.120.12">
    <property type="entry name" value="DNA-directed RNA polymerase, insert domain"/>
    <property type="match status" value="1"/>
</dbReference>
<dbReference type="Gene3D" id="3.30.1360.10">
    <property type="entry name" value="RNA polymerase, RBP11-like subunit"/>
    <property type="match status" value="1"/>
</dbReference>
<dbReference type="HAMAP" id="MF_00059">
    <property type="entry name" value="RNApol_bact_RpoA"/>
    <property type="match status" value="1"/>
</dbReference>
<dbReference type="InterPro" id="IPR011262">
    <property type="entry name" value="DNA-dir_RNA_pol_insert"/>
</dbReference>
<dbReference type="InterPro" id="IPR011263">
    <property type="entry name" value="DNA-dir_RNA_pol_RpoA/D/Rpb3"/>
</dbReference>
<dbReference type="InterPro" id="IPR011773">
    <property type="entry name" value="DNA-dir_RpoA"/>
</dbReference>
<dbReference type="InterPro" id="IPR036603">
    <property type="entry name" value="RBP11-like"/>
</dbReference>
<dbReference type="InterPro" id="IPR011260">
    <property type="entry name" value="RNAP_asu_C"/>
</dbReference>
<dbReference type="InterPro" id="IPR036643">
    <property type="entry name" value="RNApol_insert_sf"/>
</dbReference>
<dbReference type="NCBIfam" id="NF003513">
    <property type="entry name" value="PRK05182.1-2"/>
    <property type="match status" value="1"/>
</dbReference>
<dbReference type="NCBIfam" id="NF003519">
    <property type="entry name" value="PRK05182.2-5"/>
    <property type="match status" value="1"/>
</dbReference>
<dbReference type="NCBIfam" id="TIGR02027">
    <property type="entry name" value="rpoA"/>
    <property type="match status" value="1"/>
</dbReference>
<dbReference type="Pfam" id="PF01000">
    <property type="entry name" value="RNA_pol_A_bac"/>
    <property type="match status" value="1"/>
</dbReference>
<dbReference type="Pfam" id="PF03118">
    <property type="entry name" value="RNA_pol_A_CTD"/>
    <property type="match status" value="1"/>
</dbReference>
<dbReference type="Pfam" id="PF01193">
    <property type="entry name" value="RNA_pol_L"/>
    <property type="match status" value="1"/>
</dbReference>
<dbReference type="SMART" id="SM00662">
    <property type="entry name" value="RPOLD"/>
    <property type="match status" value="1"/>
</dbReference>
<dbReference type="SUPFAM" id="SSF47789">
    <property type="entry name" value="C-terminal domain of RNA polymerase alpha subunit"/>
    <property type="match status" value="1"/>
</dbReference>
<dbReference type="SUPFAM" id="SSF56553">
    <property type="entry name" value="Insert subdomain of RNA polymerase alpha subunit"/>
    <property type="match status" value="1"/>
</dbReference>
<dbReference type="SUPFAM" id="SSF55257">
    <property type="entry name" value="RBP11-like subunits of RNA polymerase"/>
    <property type="match status" value="1"/>
</dbReference>
<keyword id="KW-0240">DNA-directed RNA polymerase</keyword>
<keyword id="KW-0548">Nucleotidyltransferase</keyword>
<keyword id="KW-0804">Transcription</keyword>
<keyword id="KW-0808">Transferase</keyword>
<protein>
    <recommendedName>
        <fullName evidence="1">DNA-directed RNA polymerase subunit alpha</fullName>
        <shortName evidence="1">RNAP subunit alpha</shortName>
        <ecNumber evidence="1">2.7.7.6</ecNumber>
    </recommendedName>
    <alternativeName>
        <fullName evidence="1">RNA polymerase subunit alpha</fullName>
    </alternativeName>
    <alternativeName>
        <fullName evidence="1">Transcriptase subunit alpha</fullName>
    </alternativeName>
</protein>
<accession>Q4URG3</accession>
<proteinExistence type="inferred from homology"/>
<feature type="chain" id="PRO_0000225313" description="DNA-directed RNA polymerase subunit alpha">
    <location>
        <begin position="1"/>
        <end position="332"/>
    </location>
</feature>
<feature type="region of interest" description="Alpha N-terminal domain (alpha-NTD)" evidence="1">
    <location>
        <begin position="1"/>
        <end position="234"/>
    </location>
</feature>
<feature type="region of interest" description="Alpha C-terminal domain (alpha-CTD)" evidence="1">
    <location>
        <begin position="248"/>
        <end position="332"/>
    </location>
</feature>
<gene>
    <name evidence="1" type="primary">rpoA</name>
    <name type="ordered locus">XC_3316</name>
</gene>
<comment type="function">
    <text evidence="1">DNA-dependent RNA polymerase catalyzes the transcription of DNA into RNA using the four ribonucleoside triphosphates as substrates.</text>
</comment>
<comment type="catalytic activity">
    <reaction evidence="1">
        <text>RNA(n) + a ribonucleoside 5'-triphosphate = RNA(n+1) + diphosphate</text>
        <dbReference type="Rhea" id="RHEA:21248"/>
        <dbReference type="Rhea" id="RHEA-COMP:14527"/>
        <dbReference type="Rhea" id="RHEA-COMP:17342"/>
        <dbReference type="ChEBI" id="CHEBI:33019"/>
        <dbReference type="ChEBI" id="CHEBI:61557"/>
        <dbReference type="ChEBI" id="CHEBI:140395"/>
        <dbReference type="EC" id="2.7.7.6"/>
    </reaction>
</comment>
<comment type="subunit">
    <text evidence="1">Homodimer. The RNAP catalytic core consists of 2 alpha, 1 beta, 1 beta' and 1 omega subunit. When a sigma factor is associated with the core the holoenzyme is formed, which can initiate transcription.</text>
</comment>
<comment type="domain">
    <text evidence="1">The N-terminal domain is essential for RNAP assembly and basal transcription, whereas the C-terminal domain is involved in interaction with transcriptional regulators and with upstream promoter elements.</text>
</comment>
<comment type="similarity">
    <text evidence="1">Belongs to the RNA polymerase alpha chain family.</text>
</comment>
<sequence>MTVTANQVLRPRGPQIERLTDNRAKVVIEPLERGYGHTLGNALRRVLLSSIPGFAITEVEIDGVLHEYTTVEGLQEDVLDVLLNLKDVAIRMHSGDSATLSLSKQGPGTVTAADIRTDHNVEIINGDHVICHLTKDTALNMRLKIERGFGYQPAAARRRPDEETRTIGRLMLDASFSPVRRVAYAVEAARVEQRTDLDKLVIDIETNGTIDAEEAVRTAADILSDQLSVFGDFTHRDRGAAKPAASGVDPVLLRPIDDLELTVRSANCLKAESIYYIGDLIQKTEVELLKTPNLGKKSLTEIKEVLAQRGLALGMKLENWPPAGVAQHGMLG</sequence>
<name>RPOA_XANC8</name>